<gene>
    <name type="ordered locus">SSP0181</name>
</gene>
<evidence type="ECO:0000255" key="1">
    <source>
        <dbReference type="HAMAP-Rule" id="MF_00921"/>
    </source>
</evidence>
<feature type="chain" id="PRO_0000196727" description="Putative pyruvate, phosphate dikinase regulatory protein 1">
    <location>
        <begin position="1"/>
        <end position="271"/>
    </location>
</feature>
<feature type="binding site" evidence="1">
    <location>
        <begin position="156"/>
        <end position="163"/>
    </location>
    <ligand>
        <name>ADP</name>
        <dbReference type="ChEBI" id="CHEBI:456216"/>
    </ligand>
</feature>
<organism>
    <name type="scientific">Staphylococcus saprophyticus subsp. saprophyticus (strain ATCC 15305 / DSM 20229 / NCIMB 8711 / NCTC 7292 / S-41)</name>
    <dbReference type="NCBI Taxonomy" id="342451"/>
    <lineage>
        <taxon>Bacteria</taxon>
        <taxon>Bacillati</taxon>
        <taxon>Bacillota</taxon>
        <taxon>Bacilli</taxon>
        <taxon>Bacillales</taxon>
        <taxon>Staphylococcaceae</taxon>
        <taxon>Staphylococcus</taxon>
    </lineage>
</organism>
<reference key="1">
    <citation type="journal article" date="2005" name="Proc. Natl. Acad. Sci. U.S.A.">
        <title>Whole genome sequence of Staphylococcus saprophyticus reveals the pathogenesis of uncomplicated urinary tract infection.</title>
        <authorList>
            <person name="Kuroda M."/>
            <person name="Yamashita A."/>
            <person name="Hirakawa H."/>
            <person name="Kumano M."/>
            <person name="Morikawa K."/>
            <person name="Higashide M."/>
            <person name="Maruyama A."/>
            <person name="Inose Y."/>
            <person name="Matoba K."/>
            <person name="Toh H."/>
            <person name="Kuhara S."/>
            <person name="Hattori M."/>
            <person name="Ohta T."/>
        </authorList>
    </citation>
    <scope>NUCLEOTIDE SEQUENCE [LARGE SCALE GENOMIC DNA]</scope>
    <source>
        <strain>ATCC 15305 / DSM 20229 / NCIMB 8711 / NCTC 7292 / S-41</strain>
    </source>
</reference>
<protein>
    <recommendedName>
        <fullName evidence="1">Putative pyruvate, phosphate dikinase regulatory protein 1</fullName>
        <shortName evidence="1">PPDK regulatory protein 1</shortName>
        <ecNumber evidence="1">2.7.11.32</ecNumber>
        <ecNumber evidence="1">2.7.4.27</ecNumber>
    </recommendedName>
</protein>
<proteinExistence type="inferred from homology"/>
<accession>Q4A0R6</accession>
<sequence length="271" mass="30984">MFDDQQAPQLRLFVISDSIGETAQRMIHATLTQFPDISQIEIKKYPFIKNEEELMHILNRAKELNAVVVTTLVNPDFNIAGQHLAKKLQIPYIDYMSDLIGIIQQQTQCNPILESGALRKLDENYFKRIEAMEYAVKYDDGKHFTDIGEADALIVGVSRTSKTPLSMYLANKGYKIANIPLVLEVDIPDEVFKHKHLKVFGLTASPDYILNIRNERVKILGLSGPSNYNSMDRIREELIHAEEVFEKLNATVINTEYKSIEESAFYIEKCL</sequence>
<name>PDRP1_STAS1</name>
<dbReference type="EC" id="2.7.11.32" evidence="1"/>
<dbReference type="EC" id="2.7.4.27" evidence="1"/>
<dbReference type="EMBL" id="AP008934">
    <property type="protein sequence ID" value="BAE17326.1"/>
    <property type="molecule type" value="Genomic_DNA"/>
</dbReference>
<dbReference type="RefSeq" id="WP_011302177.1">
    <property type="nucleotide sequence ID" value="NC_007350.1"/>
</dbReference>
<dbReference type="SMR" id="Q4A0R6"/>
<dbReference type="GeneID" id="3615480"/>
<dbReference type="KEGG" id="ssp:SSP0181"/>
<dbReference type="PATRIC" id="fig|342451.11.peg.187"/>
<dbReference type="eggNOG" id="COG1806">
    <property type="taxonomic scope" value="Bacteria"/>
</dbReference>
<dbReference type="HOGENOM" id="CLU_046206_2_1_9"/>
<dbReference type="OrthoDB" id="9782201at2"/>
<dbReference type="Proteomes" id="UP000006371">
    <property type="component" value="Chromosome"/>
</dbReference>
<dbReference type="GO" id="GO:0043531">
    <property type="term" value="F:ADP binding"/>
    <property type="evidence" value="ECO:0007669"/>
    <property type="project" value="UniProtKB-UniRule"/>
</dbReference>
<dbReference type="GO" id="GO:0005524">
    <property type="term" value="F:ATP binding"/>
    <property type="evidence" value="ECO:0007669"/>
    <property type="project" value="InterPro"/>
</dbReference>
<dbReference type="GO" id="GO:0016776">
    <property type="term" value="F:phosphotransferase activity, phosphate group as acceptor"/>
    <property type="evidence" value="ECO:0007669"/>
    <property type="project" value="UniProtKB-UniRule"/>
</dbReference>
<dbReference type="GO" id="GO:0004674">
    <property type="term" value="F:protein serine/threonine kinase activity"/>
    <property type="evidence" value="ECO:0007669"/>
    <property type="project" value="UniProtKB-UniRule"/>
</dbReference>
<dbReference type="HAMAP" id="MF_00921">
    <property type="entry name" value="PDRP"/>
    <property type="match status" value="1"/>
</dbReference>
<dbReference type="InterPro" id="IPR005177">
    <property type="entry name" value="Kinase-pyrophosphorylase"/>
</dbReference>
<dbReference type="InterPro" id="IPR026565">
    <property type="entry name" value="PPDK_reg"/>
</dbReference>
<dbReference type="NCBIfam" id="NF003742">
    <property type="entry name" value="PRK05339.1"/>
    <property type="match status" value="1"/>
</dbReference>
<dbReference type="PANTHER" id="PTHR31756">
    <property type="entry name" value="PYRUVATE, PHOSPHATE DIKINASE REGULATORY PROTEIN 1, CHLOROPLASTIC"/>
    <property type="match status" value="1"/>
</dbReference>
<dbReference type="PANTHER" id="PTHR31756:SF3">
    <property type="entry name" value="PYRUVATE, PHOSPHATE DIKINASE REGULATORY PROTEIN 1, CHLOROPLASTIC"/>
    <property type="match status" value="1"/>
</dbReference>
<dbReference type="Pfam" id="PF03618">
    <property type="entry name" value="Kinase-PPPase"/>
    <property type="match status" value="1"/>
</dbReference>
<comment type="function">
    <text evidence="1">Bifunctional serine/threonine kinase and phosphorylase involved in the regulation of the pyruvate, phosphate dikinase (PPDK) by catalyzing its phosphorylation/dephosphorylation.</text>
</comment>
<comment type="catalytic activity">
    <reaction evidence="1">
        <text>N(tele)-phospho-L-histidyl/L-threonyl-[pyruvate, phosphate dikinase] + ADP = N(tele)-phospho-L-histidyl/O-phospho-L-threonyl-[pyruvate, phosphate dikinase] + AMP + H(+)</text>
        <dbReference type="Rhea" id="RHEA:43692"/>
        <dbReference type="Rhea" id="RHEA-COMP:10650"/>
        <dbReference type="Rhea" id="RHEA-COMP:10651"/>
        <dbReference type="ChEBI" id="CHEBI:15378"/>
        <dbReference type="ChEBI" id="CHEBI:30013"/>
        <dbReference type="ChEBI" id="CHEBI:61977"/>
        <dbReference type="ChEBI" id="CHEBI:83586"/>
        <dbReference type="ChEBI" id="CHEBI:456215"/>
        <dbReference type="ChEBI" id="CHEBI:456216"/>
        <dbReference type="EC" id="2.7.11.32"/>
    </reaction>
</comment>
<comment type="catalytic activity">
    <reaction evidence="1">
        <text>N(tele)-phospho-L-histidyl/O-phospho-L-threonyl-[pyruvate, phosphate dikinase] + phosphate + H(+) = N(tele)-phospho-L-histidyl/L-threonyl-[pyruvate, phosphate dikinase] + diphosphate</text>
        <dbReference type="Rhea" id="RHEA:43696"/>
        <dbReference type="Rhea" id="RHEA-COMP:10650"/>
        <dbReference type="Rhea" id="RHEA-COMP:10651"/>
        <dbReference type="ChEBI" id="CHEBI:15378"/>
        <dbReference type="ChEBI" id="CHEBI:30013"/>
        <dbReference type="ChEBI" id="CHEBI:33019"/>
        <dbReference type="ChEBI" id="CHEBI:43474"/>
        <dbReference type="ChEBI" id="CHEBI:61977"/>
        <dbReference type="ChEBI" id="CHEBI:83586"/>
        <dbReference type="EC" id="2.7.4.27"/>
    </reaction>
</comment>
<comment type="similarity">
    <text evidence="1">Belongs to the pyruvate, phosphate/water dikinase regulatory protein family. PDRP subfamily.</text>
</comment>
<keyword id="KW-0418">Kinase</keyword>
<keyword id="KW-0547">Nucleotide-binding</keyword>
<keyword id="KW-1185">Reference proteome</keyword>
<keyword id="KW-0723">Serine/threonine-protein kinase</keyword>
<keyword id="KW-0808">Transferase</keyword>